<accession>A8LMZ2</accession>
<organism>
    <name type="scientific">Dinoroseobacter shibae (strain DSM 16493 / NCIMB 14021 / DFL 12)</name>
    <dbReference type="NCBI Taxonomy" id="398580"/>
    <lineage>
        <taxon>Bacteria</taxon>
        <taxon>Pseudomonadati</taxon>
        <taxon>Pseudomonadota</taxon>
        <taxon>Alphaproteobacteria</taxon>
        <taxon>Rhodobacterales</taxon>
        <taxon>Roseobacteraceae</taxon>
        <taxon>Dinoroseobacter</taxon>
    </lineage>
</organism>
<keyword id="KW-1185">Reference proteome</keyword>
<keyword id="KW-0687">Ribonucleoprotein</keyword>
<keyword id="KW-0689">Ribosomal protein</keyword>
<dbReference type="EMBL" id="CP000830">
    <property type="protein sequence ID" value="ABV92136.1"/>
    <property type="molecule type" value="Genomic_DNA"/>
</dbReference>
<dbReference type="SMR" id="A8LMZ2"/>
<dbReference type="STRING" id="398580.Dshi_0387"/>
<dbReference type="KEGG" id="dsh:Dshi_0387"/>
<dbReference type="eggNOG" id="COG0257">
    <property type="taxonomic scope" value="Bacteria"/>
</dbReference>
<dbReference type="HOGENOM" id="CLU_135723_3_2_5"/>
<dbReference type="OrthoDB" id="9801558at2"/>
<dbReference type="Proteomes" id="UP000006833">
    <property type="component" value="Chromosome"/>
</dbReference>
<dbReference type="GO" id="GO:1990904">
    <property type="term" value="C:ribonucleoprotein complex"/>
    <property type="evidence" value="ECO:0007669"/>
    <property type="project" value="UniProtKB-KW"/>
</dbReference>
<dbReference type="GO" id="GO:0005840">
    <property type="term" value="C:ribosome"/>
    <property type="evidence" value="ECO:0007669"/>
    <property type="project" value="UniProtKB-KW"/>
</dbReference>
<dbReference type="GO" id="GO:0003735">
    <property type="term" value="F:structural constituent of ribosome"/>
    <property type="evidence" value="ECO:0007669"/>
    <property type="project" value="InterPro"/>
</dbReference>
<dbReference type="GO" id="GO:0006412">
    <property type="term" value="P:translation"/>
    <property type="evidence" value="ECO:0007669"/>
    <property type="project" value="UniProtKB-UniRule"/>
</dbReference>
<dbReference type="HAMAP" id="MF_00251">
    <property type="entry name" value="Ribosomal_bL36"/>
    <property type="match status" value="1"/>
</dbReference>
<dbReference type="InterPro" id="IPR000473">
    <property type="entry name" value="Ribosomal_bL36"/>
</dbReference>
<dbReference type="InterPro" id="IPR035977">
    <property type="entry name" value="Ribosomal_bL36_sp"/>
</dbReference>
<dbReference type="InterPro" id="IPR047621">
    <property type="entry name" value="Ribosomal_L36_bact"/>
</dbReference>
<dbReference type="NCBIfam" id="NF002021">
    <property type="entry name" value="PRK00831.1"/>
    <property type="match status" value="1"/>
</dbReference>
<dbReference type="NCBIfam" id="TIGR01022">
    <property type="entry name" value="rpmJ_bact"/>
    <property type="match status" value="1"/>
</dbReference>
<dbReference type="PANTHER" id="PTHR47781">
    <property type="entry name" value="50S RIBOSOMAL PROTEIN L36 2"/>
    <property type="match status" value="1"/>
</dbReference>
<dbReference type="PANTHER" id="PTHR47781:SF1">
    <property type="entry name" value="LARGE RIBOSOMAL SUBUNIT PROTEIN BL36B"/>
    <property type="match status" value="1"/>
</dbReference>
<dbReference type="Pfam" id="PF00444">
    <property type="entry name" value="Ribosomal_L36"/>
    <property type="match status" value="1"/>
</dbReference>
<dbReference type="SUPFAM" id="SSF57840">
    <property type="entry name" value="Ribosomal protein L36"/>
    <property type="match status" value="1"/>
</dbReference>
<dbReference type="PROSITE" id="PS00828">
    <property type="entry name" value="RIBOSOMAL_L36"/>
    <property type="match status" value="1"/>
</dbReference>
<name>RL36_DINSH</name>
<comment type="similarity">
    <text evidence="1">Belongs to the bacterial ribosomal protein bL36 family.</text>
</comment>
<proteinExistence type="inferred from homology"/>
<sequence>MKVKNSLRSLKQRHRDCRVVRRKGRVYVINKTQRRFKARQG</sequence>
<gene>
    <name evidence="1" type="primary">rpmJ</name>
    <name type="ordered locus">Dshi_0387</name>
</gene>
<protein>
    <recommendedName>
        <fullName evidence="1">Large ribosomal subunit protein bL36</fullName>
    </recommendedName>
    <alternativeName>
        <fullName evidence="2">50S ribosomal protein L36</fullName>
    </alternativeName>
</protein>
<feature type="chain" id="PRO_1000078473" description="Large ribosomal subunit protein bL36">
    <location>
        <begin position="1"/>
        <end position="41"/>
    </location>
</feature>
<evidence type="ECO:0000255" key="1">
    <source>
        <dbReference type="HAMAP-Rule" id="MF_00251"/>
    </source>
</evidence>
<evidence type="ECO:0000305" key="2"/>
<reference key="1">
    <citation type="journal article" date="2010" name="ISME J.">
        <title>The complete genome sequence of the algal symbiont Dinoroseobacter shibae: a hitchhiker's guide to life in the sea.</title>
        <authorList>
            <person name="Wagner-Dobler I."/>
            <person name="Ballhausen B."/>
            <person name="Berger M."/>
            <person name="Brinkhoff T."/>
            <person name="Buchholz I."/>
            <person name="Bunk B."/>
            <person name="Cypionka H."/>
            <person name="Daniel R."/>
            <person name="Drepper T."/>
            <person name="Gerdts G."/>
            <person name="Hahnke S."/>
            <person name="Han C."/>
            <person name="Jahn D."/>
            <person name="Kalhoefer D."/>
            <person name="Kiss H."/>
            <person name="Klenk H.P."/>
            <person name="Kyrpides N."/>
            <person name="Liebl W."/>
            <person name="Liesegang H."/>
            <person name="Meincke L."/>
            <person name="Pati A."/>
            <person name="Petersen J."/>
            <person name="Piekarski T."/>
            <person name="Pommerenke C."/>
            <person name="Pradella S."/>
            <person name="Pukall R."/>
            <person name="Rabus R."/>
            <person name="Stackebrandt E."/>
            <person name="Thole S."/>
            <person name="Thompson L."/>
            <person name="Tielen P."/>
            <person name="Tomasch J."/>
            <person name="von Jan M."/>
            <person name="Wanphrut N."/>
            <person name="Wichels A."/>
            <person name="Zech H."/>
            <person name="Simon M."/>
        </authorList>
    </citation>
    <scope>NUCLEOTIDE SEQUENCE [LARGE SCALE GENOMIC DNA]</scope>
    <source>
        <strain>DSM 16493 / NCIMB 14021 / DFL 12</strain>
    </source>
</reference>